<keyword id="KW-0963">Cytoplasm</keyword>
<keyword id="KW-0342">GTP-binding</keyword>
<keyword id="KW-0547">Nucleotide-binding</keyword>
<keyword id="KW-0648">Protein biosynthesis</keyword>
<accession>Q04BM6</accession>
<evidence type="ECO:0000255" key="1">
    <source>
        <dbReference type="HAMAP-Rule" id="MF_00072"/>
    </source>
</evidence>
<proteinExistence type="inferred from homology"/>
<feature type="chain" id="PRO_1000057486" description="Peptide chain release factor 3">
    <location>
        <begin position="1"/>
        <end position="523"/>
    </location>
</feature>
<feature type="domain" description="tr-type G">
    <location>
        <begin position="10"/>
        <end position="277"/>
    </location>
</feature>
<feature type="binding site" evidence="1">
    <location>
        <begin position="19"/>
        <end position="26"/>
    </location>
    <ligand>
        <name>GTP</name>
        <dbReference type="ChEBI" id="CHEBI:37565"/>
    </ligand>
</feature>
<feature type="binding site" evidence="1">
    <location>
        <begin position="87"/>
        <end position="91"/>
    </location>
    <ligand>
        <name>GTP</name>
        <dbReference type="ChEBI" id="CHEBI:37565"/>
    </ligand>
</feature>
<feature type="binding site" evidence="1">
    <location>
        <begin position="141"/>
        <end position="144"/>
    </location>
    <ligand>
        <name>GTP</name>
        <dbReference type="ChEBI" id="CHEBI:37565"/>
    </ligand>
</feature>
<organism>
    <name type="scientific">Lactobacillus delbrueckii subsp. bulgaricus (strain ATCC BAA-365 / Lb-18)</name>
    <dbReference type="NCBI Taxonomy" id="321956"/>
    <lineage>
        <taxon>Bacteria</taxon>
        <taxon>Bacillati</taxon>
        <taxon>Bacillota</taxon>
        <taxon>Bacilli</taxon>
        <taxon>Lactobacillales</taxon>
        <taxon>Lactobacillaceae</taxon>
        <taxon>Lactobacillus</taxon>
    </lineage>
</organism>
<sequence length="523" mass="58794">MNKELLDKVNKRRTFAIISHPDAGKTTITEQMLLLGGVIRSAGTVKARKTGNYATSDWMEIEKKRGISVTSSVMQFEYQGKRINILDTPGHQDFSEDTYRTLMAVDAAVMVIDSARGIEPQTKKLFKVVRQRGIPVFTFMNKLDRDGREPLDLVAELEEVLGIEGVAMNWPIGMGQSLLGLYDLANQRVELYHPEEGQDRFIALADGKAPAGSPLADDPQFEETLGEIELLEGAGASFDRAKVLAGQQTPVFFGSALTNFGVETFLEQFVDLAPAPGEHEVNGDEELKPDDDEFSGFIFKIQANMNPQHRDRIAFVRVCSGEFSKGLDVTLARTGKQVRLNNAVEFESSARVQVSEAVAGDIVGLYDTGNFQIGDSVYAGKRKLEFPPLPEFTPELFMRVSPKNVMKQKSFHKGMNQLVQEGAVQLYRNYQTDDYILGAVGQLQFEVFQYRMKNEYNSEVEMTSIGHRVARWINPDQLDPKMSSSRNLLVKDRFGNPLFLFENAFAERWFHDKYPDVELTEKL</sequence>
<comment type="function">
    <text evidence="1">Increases the formation of ribosomal termination complexes and stimulates activities of RF-1 and RF-2. It binds guanine nucleotides and has strong preference for UGA stop codons. It may interact directly with the ribosome. The stimulation of RF-1 and RF-2 is significantly reduced by GTP and GDP, but not by GMP.</text>
</comment>
<comment type="subcellular location">
    <subcellularLocation>
        <location evidence="1">Cytoplasm</location>
    </subcellularLocation>
</comment>
<comment type="similarity">
    <text evidence="1">Belongs to the TRAFAC class translation factor GTPase superfamily. Classic translation factor GTPase family. PrfC subfamily.</text>
</comment>
<gene>
    <name evidence="1" type="primary">prfC</name>
    <name type="ordered locus">LBUL_0506</name>
</gene>
<name>RF3_LACDB</name>
<reference key="1">
    <citation type="journal article" date="2006" name="Proc. Natl. Acad. Sci. U.S.A.">
        <title>Comparative genomics of the lactic acid bacteria.</title>
        <authorList>
            <person name="Makarova K.S."/>
            <person name="Slesarev A."/>
            <person name="Wolf Y.I."/>
            <person name="Sorokin A."/>
            <person name="Mirkin B."/>
            <person name="Koonin E.V."/>
            <person name="Pavlov A."/>
            <person name="Pavlova N."/>
            <person name="Karamychev V."/>
            <person name="Polouchine N."/>
            <person name="Shakhova V."/>
            <person name="Grigoriev I."/>
            <person name="Lou Y."/>
            <person name="Rohksar D."/>
            <person name="Lucas S."/>
            <person name="Huang K."/>
            <person name="Goodstein D.M."/>
            <person name="Hawkins T."/>
            <person name="Plengvidhya V."/>
            <person name="Welker D."/>
            <person name="Hughes J."/>
            <person name="Goh Y."/>
            <person name="Benson A."/>
            <person name="Baldwin K."/>
            <person name="Lee J.-H."/>
            <person name="Diaz-Muniz I."/>
            <person name="Dosti B."/>
            <person name="Smeianov V."/>
            <person name="Wechter W."/>
            <person name="Barabote R."/>
            <person name="Lorca G."/>
            <person name="Altermann E."/>
            <person name="Barrangou R."/>
            <person name="Ganesan B."/>
            <person name="Xie Y."/>
            <person name="Rawsthorne H."/>
            <person name="Tamir D."/>
            <person name="Parker C."/>
            <person name="Breidt F."/>
            <person name="Broadbent J.R."/>
            <person name="Hutkins R."/>
            <person name="O'Sullivan D."/>
            <person name="Steele J."/>
            <person name="Unlu G."/>
            <person name="Saier M.H. Jr."/>
            <person name="Klaenhammer T."/>
            <person name="Richardson P."/>
            <person name="Kozyavkin S."/>
            <person name="Weimer B.C."/>
            <person name="Mills D.A."/>
        </authorList>
    </citation>
    <scope>NUCLEOTIDE SEQUENCE [LARGE SCALE GENOMIC DNA]</scope>
    <source>
        <strain>ATCC BAA-365 / Lb-18</strain>
    </source>
</reference>
<dbReference type="EMBL" id="CP000412">
    <property type="protein sequence ID" value="ABJ58146.1"/>
    <property type="molecule type" value="Genomic_DNA"/>
</dbReference>
<dbReference type="RefSeq" id="WP_003618851.1">
    <property type="nucleotide sequence ID" value="NC_008529.1"/>
</dbReference>
<dbReference type="SMR" id="Q04BM6"/>
<dbReference type="KEGG" id="lbu:LBUL_0506"/>
<dbReference type="HOGENOM" id="CLU_002794_2_1_9"/>
<dbReference type="BioCyc" id="LDEL321956:LBUL_RS02400-MONOMER"/>
<dbReference type="GO" id="GO:0005829">
    <property type="term" value="C:cytosol"/>
    <property type="evidence" value="ECO:0007669"/>
    <property type="project" value="TreeGrafter"/>
</dbReference>
<dbReference type="GO" id="GO:0005525">
    <property type="term" value="F:GTP binding"/>
    <property type="evidence" value="ECO:0007669"/>
    <property type="project" value="UniProtKB-UniRule"/>
</dbReference>
<dbReference type="GO" id="GO:0003924">
    <property type="term" value="F:GTPase activity"/>
    <property type="evidence" value="ECO:0007669"/>
    <property type="project" value="InterPro"/>
</dbReference>
<dbReference type="GO" id="GO:0016150">
    <property type="term" value="F:translation release factor activity, codon nonspecific"/>
    <property type="evidence" value="ECO:0007669"/>
    <property type="project" value="TreeGrafter"/>
</dbReference>
<dbReference type="GO" id="GO:0016149">
    <property type="term" value="F:translation release factor activity, codon specific"/>
    <property type="evidence" value="ECO:0007669"/>
    <property type="project" value="UniProtKB-UniRule"/>
</dbReference>
<dbReference type="GO" id="GO:0006449">
    <property type="term" value="P:regulation of translational termination"/>
    <property type="evidence" value="ECO:0007669"/>
    <property type="project" value="UniProtKB-UniRule"/>
</dbReference>
<dbReference type="CDD" id="cd04169">
    <property type="entry name" value="RF3"/>
    <property type="match status" value="1"/>
</dbReference>
<dbReference type="CDD" id="cd16259">
    <property type="entry name" value="RF3_III"/>
    <property type="match status" value="1"/>
</dbReference>
<dbReference type="FunFam" id="3.30.70.3280:FF:000001">
    <property type="entry name" value="Peptide chain release factor 3"/>
    <property type="match status" value="1"/>
</dbReference>
<dbReference type="FunFam" id="3.40.50.300:FF:000542">
    <property type="entry name" value="Peptide chain release factor 3"/>
    <property type="match status" value="1"/>
</dbReference>
<dbReference type="Gene3D" id="3.40.50.300">
    <property type="entry name" value="P-loop containing nucleotide triphosphate hydrolases"/>
    <property type="match status" value="1"/>
</dbReference>
<dbReference type="Gene3D" id="3.30.70.3280">
    <property type="entry name" value="Peptide chain release factor 3, domain III"/>
    <property type="match status" value="1"/>
</dbReference>
<dbReference type="Gene3D" id="2.40.30.10">
    <property type="entry name" value="Translation factors"/>
    <property type="match status" value="1"/>
</dbReference>
<dbReference type="HAMAP" id="MF_00072">
    <property type="entry name" value="Rel_fac_3"/>
    <property type="match status" value="1"/>
</dbReference>
<dbReference type="InterPro" id="IPR053905">
    <property type="entry name" value="EF-G-like_DII"/>
</dbReference>
<dbReference type="InterPro" id="IPR035647">
    <property type="entry name" value="EFG_III/V"/>
</dbReference>
<dbReference type="InterPro" id="IPR031157">
    <property type="entry name" value="G_TR_CS"/>
</dbReference>
<dbReference type="InterPro" id="IPR027417">
    <property type="entry name" value="P-loop_NTPase"/>
</dbReference>
<dbReference type="InterPro" id="IPR004548">
    <property type="entry name" value="PrfC"/>
</dbReference>
<dbReference type="InterPro" id="IPR032090">
    <property type="entry name" value="RF3_C"/>
</dbReference>
<dbReference type="InterPro" id="IPR038467">
    <property type="entry name" value="RF3_dom_3_sf"/>
</dbReference>
<dbReference type="InterPro" id="IPR041732">
    <property type="entry name" value="RF3_GTP-bd"/>
</dbReference>
<dbReference type="InterPro" id="IPR005225">
    <property type="entry name" value="Small_GTP-bd"/>
</dbReference>
<dbReference type="InterPro" id="IPR000795">
    <property type="entry name" value="T_Tr_GTP-bd_dom"/>
</dbReference>
<dbReference type="InterPro" id="IPR009000">
    <property type="entry name" value="Transl_B-barrel_sf"/>
</dbReference>
<dbReference type="NCBIfam" id="TIGR00503">
    <property type="entry name" value="prfC"/>
    <property type="match status" value="1"/>
</dbReference>
<dbReference type="NCBIfam" id="NF001964">
    <property type="entry name" value="PRK00741.1"/>
    <property type="match status" value="1"/>
</dbReference>
<dbReference type="NCBIfam" id="TIGR00231">
    <property type="entry name" value="small_GTP"/>
    <property type="match status" value="1"/>
</dbReference>
<dbReference type="PANTHER" id="PTHR43556">
    <property type="entry name" value="PEPTIDE CHAIN RELEASE FACTOR RF3"/>
    <property type="match status" value="1"/>
</dbReference>
<dbReference type="PANTHER" id="PTHR43556:SF2">
    <property type="entry name" value="PEPTIDE CHAIN RELEASE FACTOR RF3"/>
    <property type="match status" value="1"/>
</dbReference>
<dbReference type="Pfam" id="PF22042">
    <property type="entry name" value="EF-G_D2"/>
    <property type="match status" value="1"/>
</dbReference>
<dbReference type="Pfam" id="PF00009">
    <property type="entry name" value="GTP_EFTU"/>
    <property type="match status" value="1"/>
</dbReference>
<dbReference type="Pfam" id="PF16658">
    <property type="entry name" value="RF3_C"/>
    <property type="match status" value="1"/>
</dbReference>
<dbReference type="PRINTS" id="PR00315">
    <property type="entry name" value="ELONGATNFCT"/>
</dbReference>
<dbReference type="SUPFAM" id="SSF54980">
    <property type="entry name" value="EF-G C-terminal domain-like"/>
    <property type="match status" value="1"/>
</dbReference>
<dbReference type="SUPFAM" id="SSF52540">
    <property type="entry name" value="P-loop containing nucleoside triphosphate hydrolases"/>
    <property type="match status" value="1"/>
</dbReference>
<dbReference type="SUPFAM" id="SSF50447">
    <property type="entry name" value="Translation proteins"/>
    <property type="match status" value="1"/>
</dbReference>
<dbReference type="PROSITE" id="PS00301">
    <property type="entry name" value="G_TR_1"/>
    <property type="match status" value="1"/>
</dbReference>
<dbReference type="PROSITE" id="PS51722">
    <property type="entry name" value="G_TR_2"/>
    <property type="match status" value="1"/>
</dbReference>
<protein>
    <recommendedName>
        <fullName evidence="1">Peptide chain release factor 3</fullName>
        <shortName evidence="1">RF-3</shortName>
    </recommendedName>
</protein>